<protein>
    <recommendedName>
        <fullName evidence="1">Phosphatidylglycerol--prolipoprotein diacylglyceryl transferase</fullName>
        <ecNumber evidence="1">2.5.1.145</ecNumber>
    </recommendedName>
</protein>
<sequence>MLPYPQIDPVAVAIGPLQIHWYGLMYLVGIGGAWLLASRRLNKFDPTWTKEKLSDLIFWLAMGVIVGGRLGYVLFYDLSAYIANPLLIFEVWKGGMAFHGGFVGVMIAAWWFGKRNGKSFFQLMDFVAPLVPIGLGAGRIGNFINAELWGKPTDVPWAMVFPPFSDPAQLARHPSQLYQFALEGVALFIILNLYARKPRPTMAVSGMFALFYGIFRFVVEFVRVPDAQLGYLAWGWVTMGQILSLPMIIAGLLLIWLAYKRDPSASKAAA</sequence>
<comment type="function">
    <text evidence="1">Catalyzes the transfer of the diacylglyceryl group from phosphatidylglycerol to the sulfhydryl group of the N-terminal cysteine of a prolipoprotein, the first step in the formation of mature lipoproteins.</text>
</comment>
<comment type="catalytic activity">
    <reaction evidence="1">
        <text>L-cysteinyl-[prolipoprotein] + a 1,2-diacyl-sn-glycero-3-phospho-(1'-sn-glycerol) = an S-1,2-diacyl-sn-glyceryl-L-cysteinyl-[prolipoprotein] + sn-glycerol 1-phosphate + H(+)</text>
        <dbReference type="Rhea" id="RHEA:56712"/>
        <dbReference type="Rhea" id="RHEA-COMP:14679"/>
        <dbReference type="Rhea" id="RHEA-COMP:14680"/>
        <dbReference type="ChEBI" id="CHEBI:15378"/>
        <dbReference type="ChEBI" id="CHEBI:29950"/>
        <dbReference type="ChEBI" id="CHEBI:57685"/>
        <dbReference type="ChEBI" id="CHEBI:64716"/>
        <dbReference type="ChEBI" id="CHEBI:140658"/>
        <dbReference type="EC" id="2.5.1.145"/>
    </reaction>
</comment>
<comment type="pathway">
    <text evidence="1">Protein modification; lipoprotein biosynthesis (diacylglyceryl transfer).</text>
</comment>
<comment type="subcellular location">
    <subcellularLocation>
        <location evidence="1">Cell inner membrane</location>
        <topology evidence="1">Multi-pass membrane protein</topology>
    </subcellularLocation>
</comment>
<comment type="similarity">
    <text evidence="1">Belongs to the Lgt family.</text>
</comment>
<dbReference type="EC" id="2.5.1.145" evidence="1"/>
<dbReference type="EMBL" id="CP000075">
    <property type="protein sequence ID" value="AAY39868.1"/>
    <property type="molecule type" value="Genomic_DNA"/>
</dbReference>
<dbReference type="RefSeq" id="WP_003405275.1">
    <property type="nucleotide sequence ID" value="NC_007005.1"/>
</dbReference>
<dbReference type="RefSeq" id="YP_237906.1">
    <property type="nucleotide sequence ID" value="NC_007005.1"/>
</dbReference>
<dbReference type="SMR" id="Q4ZLV4"/>
<dbReference type="STRING" id="205918.Psyr_4841"/>
<dbReference type="KEGG" id="psb:Psyr_4841"/>
<dbReference type="PATRIC" id="fig|205918.7.peg.5005"/>
<dbReference type="eggNOG" id="COG0682">
    <property type="taxonomic scope" value="Bacteria"/>
</dbReference>
<dbReference type="HOGENOM" id="CLU_013386_1_0_6"/>
<dbReference type="OrthoDB" id="871140at2"/>
<dbReference type="UniPathway" id="UPA00664"/>
<dbReference type="Proteomes" id="UP000000426">
    <property type="component" value="Chromosome"/>
</dbReference>
<dbReference type="GO" id="GO:0005886">
    <property type="term" value="C:plasma membrane"/>
    <property type="evidence" value="ECO:0007669"/>
    <property type="project" value="UniProtKB-SubCell"/>
</dbReference>
<dbReference type="GO" id="GO:0008961">
    <property type="term" value="F:phosphatidylglycerol-prolipoprotein diacylglyceryl transferase activity"/>
    <property type="evidence" value="ECO:0007669"/>
    <property type="project" value="UniProtKB-UniRule"/>
</dbReference>
<dbReference type="GO" id="GO:0042158">
    <property type="term" value="P:lipoprotein biosynthetic process"/>
    <property type="evidence" value="ECO:0007669"/>
    <property type="project" value="UniProtKB-UniRule"/>
</dbReference>
<dbReference type="HAMAP" id="MF_01147">
    <property type="entry name" value="Lgt"/>
    <property type="match status" value="1"/>
</dbReference>
<dbReference type="InterPro" id="IPR001640">
    <property type="entry name" value="Lgt"/>
</dbReference>
<dbReference type="NCBIfam" id="TIGR00544">
    <property type="entry name" value="lgt"/>
    <property type="match status" value="1"/>
</dbReference>
<dbReference type="PANTHER" id="PTHR30589:SF0">
    <property type="entry name" value="PHOSPHATIDYLGLYCEROL--PROLIPOPROTEIN DIACYLGLYCERYL TRANSFERASE"/>
    <property type="match status" value="1"/>
</dbReference>
<dbReference type="PANTHER" id="PTHR30589">
    <property type="entry name" value="PROLIPOPROTEIN DIACYLGLYCERYL TRANSFERASE"/>
    <property type="match status" value="1"/>
</dbReference>
<dbReference type="Pfam" id="PF01790">
    <property type="entry name" value="LGT"/>
    <property type="match status" value="1"/>
</dbReference>
<dbReference type="PROSITE" id="PS01311">
    <property type="entry name" value="LGT"/>
    <property type="match status" value="1"/>
</dbReference>
<evidence type="ECO:0000255" key="1">
    <source>
        <dbReference type="HAMAP-Rule" id="MF_01147"/>
    </source>
</evidence>
<keyword id="KW-0997">Cell inner membrane</keyword>
<keyword id="KW-1003">Cell membrane</keyword>
<keyword id="KW-0472">Membrane</keyword>
<keyword id="KW-0808">Transferase</keyword>
<keyword id="KW-0812">Transmembrane</keyword>
<keyword id="KW-1133">Transmembrane helix</keyword>
<organism>
    <name type="scientific">Pseudomonas syringae pv. syringae (strain B728a)</name>
    <dbReference type="NCBI Taxonomy" id="205918"/>
    <lineage>
        <taxon>Bacteria</taxon>
        <taxon>Pseudomonadati</taxon>
        <taxon>Pseudomonadota</taxon>
        <taxon>Gammaproteobacteria</taxon>
        <taxon>Pseudomonadales</taxon>
        <taxon>Pseudomonadaceae</taxon>
        <taxon>Pseudomonas</taxon>
        <taxon>Pseudomonas syringae</taxon>
    </lineage>
</organism>
<proteinExistence type="inferred from homology"/>
<gene>
    <name evidence="1" type="primary">lgt</name>
    <name type="ordered locus">Psyr_4841</name>
</gene>
<feature type="chain" id="PRO_1000053479" description="Phosphatidylglycerol--prolipoprotein diacylglyceryl transferase">
    <location>
        <begin position="1"/>
        <end position="270"/>
    </location>
</feature>
<feature type="transmembrane region" description="Helical" evidence="1">
    <location>
        <begin position="10"/>
        <end position="30"/>
    </location>
</feature>
<feature type="transmembrane region" description="Helical" evidence="1">
    <location>
        <begin position="56"/>
        <end position="76"/>
    </location>
</feature>
<feature type="transmembrane region" description="Helical" evidence="1">
    <location>
        <begin position="92"/>
        <end position="112"/>
    </location>
</feature>
<feature type="transmembrane region" description="Helical" evidence="1">
    <location>
        <begin position="120"/>
        <end position="140"/>
    </location>
</feature>
<feature type="transmembrane region" description="Helical" evidence="1">
    <location>
        <begin position="175"/>
        <end position="195"/>
    </location>
</feature>
<feature type="transmembrane region" description="Helical" evidence="1">
    <location>
        <begin position="202"/>
        <end position="222"/>
    </location>
</feature>
<feature type="transmembrane region" description="Helical" evidence="1">
    <location>
        <begin position="237"/>
        <end position="257"/>
    </location>
</feature>
<feature type="binding site" evidence="1">
    <location>
        <position position="139"/>
    </location>
    <ligand>
        <name>a 1,2-diacyl-sn-glycero-3-phospho-(1'-sn-glycerol)</name>
        <dbReference type="ChEBI" id="CHEBI:64716"/>
    </ligand>
</feature>
<reference key="1">
    <citation type="journal article" date="2005" name="Proc. Natl. Acad. Sci. U.S.A.">
        <title>Comparison of the complete genome sequences of Pseudomonas syringae pv. syringae B728a and pv. tomato DC3000.</title>
        <authorList>
            <person name="Feil H."/>
            <person name="Feil W.S."/>
            <person name="Chain P."/>
            <person name="Larimer F."/>
            <person name="Dibartolo G."/>
            <person name="Copeland A."/>
            <person name="Lykidis A."/>
            <person name="Trong S."/>
            <person name="Nolan M."/>
            <person name="Goltsman E."/>
            <person name="Thiel J."/>
            <person name="Malfatti S."/>
            <person name="Loper J.E."/>
            <person name="Lapidus A."/>
            <person name="Detter J.C."/>
            <person name="Land M."/>
            <person name="Richardson P.M."/>
            <person name="Kyrpides N.C."/>
            <person name="Ivanova N."/>
            <person name="Lindow S.E."/>
        </authorList>
    </citation>
    <scope>NUCLEOTIDE SEQUENCE [LARGE SCALE GENOMIC DNA]</scope>
    <source>
        <strain>B728a</strain>
    </source>
</reference>
<name>LGT_PSEU2</name>
<accession>Q4ZLV4</accession>